<name>PGA33_CANAL</name>
<sequence>MRGIILLSFVLTSCLAADAVPAAADAAAVTTTTPAGAAAAAATTATTAKANTAATTNTAAAAAAAADTLTTKGTTTGTAKTTGVTTGTAKTTATTAVTSDTAVAANPATMNPSELSIYSLTVTMNQAQLQNFLATHSSGAATAGATGTSVASGASGASLEDSTTTTAAAAAGGNGAATIDDTTKGLTFVTSRTLKPSSSATSQGSAQASGSGSNASQANAAGVYSTNSVLVFVSICIGFIGGSLGI</sequence>
<gene>
    <name type="primary">PGA33</name>
    <name type="ordered locus">CAALFM_C203440WA</name>
    <name type="ORF">CaO19.8495</name>
    <name type="ORF">CaO19.876</name>
</gene>
<protein>
    <recommendedName>
        <fullName>Predicted GPI-anchored protein 33</fullName>
    </recommendedName>
</protein>
<proteinExistence type="evidence at protein level"/>
<keyword id="KW-1003">Cell membrane</keyword>
<keyword id="KW-0325">Glycoprotein</keyword>
<keyword id="KW-0336">GPI-anchor</keyword>
<keyword id="KW-0449">Lipoprotein</keyword>
<keyword id="KW-0472">Membrane</keyword>
<keyword id="KW-1185">Reference proteome</keyword>
<keyword id="KW-0732">Signal</keyword>
<accession>Q5AHC0</accession>
<accession>A0A1D8PGV4</accession>
<accession>Q5AHP6</accession>
<reference key="1">
    <citation type="journal article" date="2004" name="Proc. Natl. Acad. Sci. U.S.A.">
        <title>The diploid genome sequence of Candida albicans.</title>
        <authorList>
            <person name="Jones T."/>
            <person name="Federspiel N.A."/>
            <person name="Chibana H."/>
            <person name="Dungan J."/>
            <person name="Kalman S."/>
            <person name="Magee B.B."/>
            <person name="Newport G."/>
            <person name="Thorstenson Y.R."/>
            <person name="Agabian N."/>
            <person name="Magee P.T."/>
            <person name="Davis R.W."/>
            <person name="Scherer S."/>
        </authorList>
    </citation>
    <scope>NUCLEOTIDE SEQUENCE [LARGE SCALE GENOMIC DNA]</scope>
    <source>
        <strain>SC5314 / ATCC MYA-2876</strain>
    </source>
</reference>
<reference key="2">
    <citation type="journal article" date="2007" name="Genome Biol.">
        <title>Assembly of the Candida albicans genome into sixteen supercontigs aligned on the eight chromosomes.</title>
        <authorList>
            <person name="van het Hoog M."/>
            <person name="Rast T.J."/>
            <person name="Martchenko M."/>
            <person name="Grindle S."/>
            <person name="Dignard D."/>
            <person name="Hogues H."/>
            <person name="Cuomo C."/>
            <person name="Berriman M."/>
            <person name="Scherer S."/>
            <person name="Magee B.B."/>
            <person name="Whiteway M."/>
            <person name="Chibana H."/>
            <person name="Nantel A."/>
            <person name="Magee P.T."/>
        </authorList>
    </citation>
    <scope>GENOME REANNOTATION</scope>
    <source>
        <strain>SC5314 / ATCC MYA-2876</strain>
    </source>
</reference>
<reference key="3">
    <citation type="journal article" date="2013" name="Genome Biol.">
        <title>Assembly of a phased diploid Candida albicans genome facilitates allele-specific measurements and provides a simple model for repeat and indel structure.</title>
        <authorList>
            <person name="Muzzey D."/>
            <person name="Schwartz K."/>
            <person name="Weissman J.S."/>
            <person name="Sherlock G."/>
        </authorList>
    </citation>
    <scope>NUCLEOTIDE SEQUENCE [LARGE SCALE GENOMIC DNA]</scope>
    <scope>GENOME REANNOTATION</scope>
    <source>
        <strain>SC5314 / ATCC MYA-2876</strain>
    </source>
</reference>
<reference key="4">
    <citation type="journal article" date="2003" name="Yeast">
        <title>Genome-wide identification of fungal GPI proteins.</title>
        <authorList>
            <person name="De Groot P.W."/>
            <person name="Hellingwerf K.J."/>
            <person name="Klis F.M."/>
        </authorList>
    </citation>
    <scope>PREDICTION OF GPI-ANCHOR</scope>
</reference>
<comment type="subcellular location">
    <subcellularLocation>
        <location evidence="2">Cell membrane</location>
        <topology evidence="2">Lipid-anchor</topology>
        <topology evidence="2">GPI-anchor</topology>
    </subcellularLocation>
</comment>
<evidence type="ECO:0000255" key="1"/>
<evidence type="ECO:0000305" key="2"/>
<organism>
    <name type="scientific">Candida albicans (strain SC5314 / ATCC MYA-2876)</name>
    <name type="common">Yeast</name>
    <dbReference type="NCBI Taxonomy" id="237561"/>
    <lineage>
        <taxon>Eukaryota</taxon>
        <taxon>Fungi</taxon>
        <taxon>Dikarya</taxon>
        <taxon>Ascomycota</taxon>
        <taxon>Saccharomycotina</taxon>
        <taxon>Pichiomycetes</taxon>
        <taxon>Debaryomycetaceae</taxon>
        <taxon>Candida/Lodderomyces clade</taxon>
        <taxon>Candida</taxon>
    </lineage>
</organism>
<feature type="signal peptide" evidence="1">
    <location>
        <begin position="1"/>
        <end position="16"/>
    </location>
</feature>
<feature type="chain" id="PRO_0000424935" description="Predicted GPI-anchored protein 33">
    <location>
        <begin position="17"/>
        <end position="219"/>
    </location>
</feature>
<feature type="propeptide" id="PRO_0000424936" description="Removed in mature form" evidence="1">
    <location>
        <begin position="220"/>
        <end position="246"/>
    </location>
</feature>
<feature type="lipid moiety-binding region" description="GPI-anchor amidated asparagine" evidence="1">
    <location>
        <position position="219"/>
    </location>
</feature>
<feature type="glycosylation site" description="N-linked (GlcNAc...) asparagine" evidence="1">
    <location>
        <position position="214"/>
    </location>
</feature>
<dbReference type="EMBL" id="CP017624">
    <property type="protein sequence ID" value="AOW27380.1"/>
    <property type="molecule type" value="Genomic_DNA"/>
</dbReference>
<dbReference type="RefSeq" id="XP_720999.1">
    <property type="nucleotide sequence ID" value="XM_715906.1"/>
</dbReference>
<dbReference type="SMR" id="Q5AHC0"/>
<dbReference type="STRING" id="237561.Q5AHC0"/>
<dbReference type="GlyCosmos" id="Q5AHC0">
    <property type="glycosylation" value="1 site, No reported glycans"/>
</dbReference>
<dbReference type="EnsemblFungi" id="C2_03440W_A-T">
    <property type="protein sequence ID" value="C2_03440W_A-T-p1"/>
    <property type="gene ID" value="C2_03440W_A"/>
</dbReference>
<dbReference type="GeneID" id="3637350"/>
<dbReference type="KEGG" id="cal:CAALFM_C203440WA"/>
<dbReference type="CGD" id="CAL0000199795">
    <property type="gene designation" value="PGA33"/>
</dbReference>
<dbReference type="VEuPathDB" id="FungiDB:C2_03440W_A"/>
<dbReference type="eggNOG" id="ENOG502RQJI">
    <property type="taxonomic scope" value="Eukaryota"/>
</dbReference>
<dbReference type="HOGENOM" id="CLU_1069554_0_0_1"/>
<dbReference type="InParanoid" id="Q5AHC0"/>
<dbReference type="PRO" id="PR:Q5AHC0"/>
<dbReference type="Proteomes" id="UP000000559">
    <property type="component" value="Chromosome 2"/>
</dbReference>
<dbReference type="GO" id="GO:0005886">
    <property type="term" value="C:plasma membrane"/>
    <property type="evidence" value="ECO:0007669"/>
    <property type="project" value="UniProtKB-SubCell"/>
</dbReference>
<dbReference type="GO" id="GO:0098552">
    <property type="term" value="C:side of membrane"/>
    <property type="evidence" value="ECO:0007669"/>
    <property type="project" value="UniProtKB-KW"/>
</dbReference>